<dbReference type="EMBL" id="L36940">
    <property type="protein sequence ID" value="AAA50573.1"/>
    <property type="molecule type" value="Genomic_DNA"/>
</dbReference>
<dbReference type="EMBL" id="U25841">
    <property type="protein sequence ID" value="AAB64618.1"/>
    <property type="molecule type" value="Genomic_DNA"/>
</dbReference>
<dbReference type="EMBL" id="BK006949">
    <property type="protein sequence ID" value="DAA11605.1"/>
    <property type="molecule type" value="Genomic_DNA"/>
</dbReference>
<dbReference type="PIR" id="S58819">
    <property type="entry name" value="S58819"/>
</dbReference>
<dbReference type="RefSeq" id="NP_015515.1">
    <property type="nucleotide sequence ID" value="NM_001184286.1"/>
</dbReference>
<dbReference type="PDB" id="4BUJ">
    <property type="method" value="X-ray"/>
    <property type="resolution" value="3.70 A"/>
    <property type="chains" value="B/F=1-1432"/>
</dbReference>
<dbReference type="PDB" id="5MC6">
    <property type="method" value="EM"/>
    <property type="resolution" value="3.80 A"/>
    <property type="chains" value="i=1-1432"/>
</dbReference>
<dbReference type="PDB" id="8Q9T">
    <property type="method" value="EM"/>
    <property type="resolution" value="2.84 A"/>
    <property type="chains" value="E=1-1432"/>
</dbReference>
<dbReference type="PDB" id="8QCA">
    <property type="method" value="EM"/>
    <property type="resolution" value="2.84 A"/>
    <property type="chains" value="B=1-1432"/>
</dbReference>
<dbReference type="PDB" id="8QCB">
    <property type="method" value="EM"/>
    <property type="resolution" value="2.80 A"/>
    <property type="chains" value="B=1-1432"/>
</dbReference>
<dbReference type="PDBsum" id="4BUJ"/>
<dbReference type="PDBsum" id="5MC6"/>
<dbReference type="PDBsum" id="8Q9T"/>
<dbReference type="PDBsum" id="8QCA"/>
<dbReference type="PDBsum" id="8QCB"/>
<dbReference type="EMDB" id="EMD-18288"/>
<dbReference type="EMDB" id="EMD-18326"/>
<dbReference type="EMDB" id="EMD-18328"/>
<dbReference type="EMDB" id="EMD-3461"/>
<dbReference type="SMR" id="P17883"/>
<dbReference type="BioGRID" id="36361">
    <property type="interactions" value="285"/>
</dbReference>
<dbReference type="ComplexPortal" id="CPX-1040">
    <property type="entry name" value="SKI complex"/>
</dbReference>
<dbReference type="DIP" id="DIP-6379N"/>
<dbReference type="FunCoup" id="P17883">
    <property type="interactions" value="616"/>
</dbReference>
<dbReference type="IntAct" id="P17883">
    <property type="interactions" value="49"/>
</dbReference>
<dbReference type="MINT" id="P17883"/>
<dbReference type="STRING" id="4932.YPR189W"/>
<dbReference type="iPTMnet" id="P17883"/>
<dbReference type="PaxDb" id="4932-YPR189W"/>
<dbReference type="PeptideAtlas" id="P17883"/>
<dbReference type="EnsemblFungi" id="YPR189W_mRNA">
    <property type="protein sequence ID" value="YPR189W"/>
    <property type="gene ID" value="YPR189W"/>
</dbReference>
<dbReference type="GeneID" id="856319"/>
<dbReference type="KEGG" id="sce:YPR189W"/>
<dbReference type="AGR" id="SGD:S000006393"/>
<dbReference type="SGD" id="S000006393">
    <property type="gene designation" value="SKI3"/>
</dbReference>
<dbReference type="VEuPathDB" id="FungiDB:YPR189W"/>
<dbReference type="eggNOG" id="KOG1127">
    <property type="taxonomic scope" value="Eukaryota"/>
</dbReference>
<dbReference type="GeneTree" id="ENSGT00390000016407"/>
<dbReference type="HOGENOM" id="CLU_001688_0_0_1"/>
<dbReference type="InParanoid" id="P17883"/>
<dbReference type="OMA" id="CQWELDP"/>
<dbReference type="OrthoDB" id="421075at2759"/>
<dbReference type="BioCyc" id="YEAST:G3O-34312-MONOMER"/>
<dbReference type="Reactome" id="R-SCE-429958">
    <property type="pathway name" value="mRNA decay by 3' to 5' exoribonuclease"/>
</dbReference>
<dbReference type="BioGRID-ORCS" id="856319">
    <property type="hits" value="3 hits in 10 CRISPR screens"/>
</dbReference>
<dbReference type="EvolutionaryTrace" id="P17883"/>
<dbReference type="PRO" id="PR:P17883"/>
<dbReference type="Proteomes" id="UP000002311">
    <property type="component" value="Chromosome XVI"/>
</dbReference>
<dbReference type="RNAct" id="P17883">
    <property type="molecule type" value="protein"/>
</dbReference>
<dbReference type="GO" id="GO:0005634">
    <property type="term" value="C:nucleus"/>
    <property type="evidence" value="ECO:0007669"/>
    <property type="project" value="UniProtKB-SubCell"/>
</dbReference>
<dbReference type="GO" id="GO:0055087">
    <property type="term" value="C:Ski complex"/>
    <property type="evidence" value="ECO:0000314"/>
    <property type="project" value="SGD"/>
</dbReference>
<dbReference type="GO" id="GO:0051607">
    <property type="term" value="P:defense response to virus"/>
    <property type="evidence" value="ECO:0007669"/>
    <property type="project" value="UniProtKB-KW"/>
</dbReference>
<dbReference type="GO" id="GO:0006402">
    <property type="term" value="P:mRNA catabolic process"/>
    <property type="evidence" value="ECO:0000314"/>
    <property type="project" value="ComplexPortal"/>
</dbReference>
<dbReference type="GO" id="GO:0000956">
    <property type="term" value="P:nuclear-transcribed mRNA catabolic process"/>
    <property type="evidence" value="ECO:0000314"/>
    <property type="project" value="ComplexPortal"/>
</dbReference>
<dbReference type="GO" id="GO:0070478">
    <property type="term" value="P:nuclear-transcribed mRNA catabolic process, 3'-5' exonucleolytic nonsense-mediated decay"/>
    <property type="evidence" value="ECO:0000315"/>
    <property type="project" value="SGD"/>
</dbReference>
<dbReference type="GO" id="GO:0070481">
    <property type="term" value="P:nuclear-transcribed mRNA catabolic process, non-stop decay"/>
    <property type="evidence" value="ECO:0000315"/>
    <property type="project" value="SGD"/>
</dbReference>
<dbReference type="FunFam" id="1.25.40.10:FF:002457">
    <property type="entry name" value="Superkiller"/>
    <property type="match status" value="1"/>
</dbReference>
<dbReference type="FunFam" id="1.25.40.10:FF:001187">
    <property type="entry name" value="Superkiller 3 protein"/>
    <property type="match status" value="1"/>
</dbReference>
<dbReference type="Gene3D" id="1.25.40.10">
    <property type="entry name" value="Tetratricopeptide repeat domain"/>
    <property type="match status" value="5"/>
</dbReference>
<dbReference type="InterPro" id="IPR039226">
    <property type="entry name" value="Ski3/TTC37"/>
</dbReference>
<dbReference type="InterPro" id="IPR011990">
    <property type="entry name" value="TPR-like_helical_dom_sf"/>
</dbReference>
<dbReference type="InterPro" id="IPR040962">
    <property type="entry name" value="TPR_22"/>
</dbReference>
<dbReference type="InterPro" id="IPR019734">
    <property type="entry name" value="TPR_rpt"/>
</dbReference>
<dbReference type="PANTHER" id="PTHR15704">
    <property type="entry name" value="SUPERKILLER 3 PROTEIN-RELATED"/>
    <property type="match status" value="1"/>
</dbReference>
<dbReference type="PANTHER" id="PTHR15704:SF7">
    <property type="entry name" value="SUPERKILLER COMPLEX PROTEIN 3"/>
    <property type="match status" value="1"/>
</dbReference>
<dbReference type="Pfam" id="PF18833">
    <property type="entry name" value="TPR_22"/>
    <property type="match status" value="1"/>
</dbReference>
<dbReference type="Pfam" id="PF13181">
    <property type="entry name" value="TPR_8"/>
    <property type="match status" value="1"/>
</dbReference>
<dbReference type="SMART" id="SM00028">
    <property type="entry name" value="TPR"/>
    <property type="match status" value="8"/>
</dbReference>
<dbReference type="SUPFAM" id="SSF81901">
    <property type="entry name" value="HCP-like"/>
    <property type="match status" value="1"/>
</dbReference>
<dbReference type="SUPFAM" id="SSF48439">
    <property type="entry name" value="Protein prenylyltransferase"/>
    <property type="match status" value="1"/>
</dbReference>
<dbReference type="SUPFAM" id="SSF48452">
    <property type="entry name" value="TPR-like"/>
    <property type="match status" value="2"/>
</dbReference>
<dbReference type="PROSITE" id="PS50005">
    <property type="entry name" value="TPR"/>
    <property type="match status" value="7"/>
</dbReference>
<dbReference type="PROSITE" id="PS50293">
    <property type="entry name" value="TPR_REGION"/>
    <property type="match status" value="5"/>
</dbReference>
<reference key="1">
    <citation type="journal article" date="1989" name="Yeast">
        <title>Structure and nuclear localization signal of the SKI3 antiviral protein of Saccharomyces cerevisiae.</title>
        <authorList>
            <person name="Rhee S.-K."/>
            <person name="Icho T."/>
            <person name="Wickner R.B."/>
        </authorList>
    </citation>
    <scope>NUCLEOTIDE SEQUENCE [GENOMIC DNA]</scope>
    <scope>SUBCELLULAR LOCATION</scope>
</reference>
<reference key="2">
    <citation type="journal article" date="1997" name="Nature">
        <title>The nucleotide sequence of Saccharomyces cerevisiae chromosome XVI.</title>
        <authorList>
            <person name="Bussey H."/>
            <person name="Storms R.K."/>
            <person name="Ahmed A."/>
            <person name="Albermann K."/>
            <person name="Allen E."/>
            <person name="Ansorge W."/>
            <person name="Araujo R."/>
            <person name="Aparicio A."/>
            <person name="Barrell B.G."/>
            <person name="Badcock K."/>
            <person name="Benes V."/>
            <person name="Botstein D."/>
            <person name="Bowman S."/>
            <person name="Brueckner M."/>
            <person name="Carpenter J."/>
            <person name="Cherry J.M."/>
            <person name="Chung E."/>
            <person name="Churcher C.M."/>
            <person name="Coster F."/>
            <person name="Davis K."/>
            <person name="Davis R.W."/>
            <person name="Dietrich F.S."/>
            <person name="Delius H."/>
            <person name="DiPaolo T."/>
            <person name="Dubois E."/>
            <person name="Duesterhoeft A."/>
            <person name="Duncan M."/>
            <person name="Floeth M."/>
            <person name="Fortin N."/>
            <person name="Friesen J.D."/>
            <person name="Fritz C."/>
            <person name="Goffeau A."/>
            <person name="Hall J."/>
            <person name="Hebling U."/>
            <person name="Heumann K."/>
            <person name="Hilbert H."/>
            <person name="Hillier L.W."/>
            <person name="Hunicke-Smith S."/>
            <person name="Hyman R.W."/>
            <person name="Johnston M."/>
            <person name="Kalman S."/>
            <person name="Kleine K."/>
            <person name="Komp C."/>
            <person name="Kurdi O."/>
            <person name="Lashkari D."/>
            <person name="Lew H."/>
            <person name="Lin A."/>
            <person name="Lin D."/>
            <person name="Louis E.J."/>
            <person name="Marathe R."/>
            <person name="Messenguy F."/>
            <person name="Mewes H.-W."/>
            <person name="Mirtipati S."/>
            <person name="Moestl D."/>
            <person name="Mueller-Auer S."/>
            <person name="Namath A."/>
            <person name="Nentwich U."/>
            <person name="Oefner P."/>
            <person name="Pearson D."/>
            <person name="Petel F.X."/>
            <person name="Pohl T.M."/>
            <person name="Purnelle B."/>
            <person name="Rajandream M.A."/>
            <person name="Rechmann S."/>
            <person name="Rieger M."/>
            <person name="Riles L."/>
            <person name="Roberts D."/>
            <person name="Schaefer M."/>
            <person name="Scharfe M."/>
            <person name="Scherens B."/>
            <person name="Schramm S."/>
            <person name="Schroeder M."/>
            <person name="Sdicu A.-M."/>
            <person name="Tettelin H."/>
            <person name="Urrestarazu L.A."/>
            <person name="Ushinsky S."/>
            <person name="Vierendeels F."/>
            <person name="Vissers S."/>
            <person name="Voss H."/>
            <person name="Walsh S.V."/>
            <person name="Wambutt R."/>
            <person name="Wang Y."/>
            <person name="Wedler E."/>
            <person name="Wedler H."/>
            <person name="Winnett E."/>
            <person name="Zhong W.-W."/>
            <person name="Zollner A."/>
            <person name="Vo D.H."/>
            <person name="Hani J."/>
        </authorList>
    </citation>
    <scope>NUCLEOTIDE SEQUENCE [LARGE SCALE GENOMIC DNA]</scope>
    <source>
        <strain>ATCC 204508 / S288c</strain>
    </source>
</reference>
<reference key="3">
    <citation type="journal article" date="2014" name="G3 (Bethesda)">
        <title>The reference genome sequence of Saccharomyces cerevisiae: Then and now.</title>
        <authorList>
            <person name="Engel S.R."/>
            <person name="Dietrich F.S."/>
            <person name="Fisk D.G."/>
            <person name="Binkley G."/>
            <person name="Balakrishnan R."/>
            <person name="Costanzo M.C."/>
            <person name="Dwight S.S."/>
            <person name="Hitz B.C."/>
            <person name="Karra K."/>
            <person name="Nash R.S."/>
            <person name="Weng S."/>
            <person name="Wong E.D."/>
            <person name="Lloyd P."/>
            <person name="Skrzypek M.S."/>
            <person name="Miyasato S.R."/>
            <person name="Simison M."/>
            <person name="Cherry J.M."/>
        </authorList>
    </citation>
    <scope>GENOME REANNOTATION</scope>
    <source>
        <strain>ATCC 204508 / S288c</strain>
    </source>
</reference>
<reference key="4">
    <citation type="journal article" date="1978" name="J. Bacteriol.">
        <title>Chromosomal superkiller mutants of Saccharomyces cerevisiae.</title>
        <authorList>
            <person name="Toh-e A."/>
            <person name="Guerry P."/>
            <person name="Wickner R.B."/>
        </authorList>
    </citation>
    <scope>FUNCTION</scope>
</reference>
<reference key="5">
    <citation type="journal article" date="1984" name="Mol. Cell. Biol.">
        <title>Superkiller mutations in Saccharomyces cerevisiae suppress exclusion of M2 double-stranded RNA by L-A-HN and confer cold sensitivity in the presence of M and L-A-HN.</title>
        <authorList>
            <person name="Ridley S.P."/>
            <person name="Sommer S.S."/>
            <person name="Wickner R.B."/>
        </authorList>
    </citation>
    <scope>FUNCTION</scope>
</reference>
<reference key="6">
    <citation type="journal article" date="1990" name="Cell">
        <title>A repeating amino acid motif in CDC23 defines a family of proteins and a new relationship among genes required for mitosis and RNA synthesis.</title>
        <authorList>
            <person name="Sikorski R.S."/>
            <person name="Boguski M.S."/>
            <person name="Goebl M."/>
            <person name="Hieter P.A."/>
        </authorList>
    </citation>
    <scope>DOMAINS TPR REPEATS</scope>
</reference>
<reference key="7">
    <citation type="journal article" date="1995" name="Mol. Cell. Biol.">
        <title>Synthetic lethality of sep1 (xrn1) ski2 and sep1 (xrn1) ski3 mutants of Saccharomyces cerevisiae is independent of killer virus and suggests a general role for these genes in translation control.</title>
        <authorList>
            <person name="Johnson A.W."/>
            <person name="Kolodner R.D."/>
        </authorList>
    </citation>
    <scope>FUNCTION</scope>
</reference>
<reference key="8">
    <citation type="journal article" date="1995" name="Mol. Cell. Biol.">
        <title>Decoying the cap- mRNA degradation system by a double-stranded RNA virus and poly(A)- mRNA surveillance by a yeast antiviral system.</title>
        <authorList>
            <person name="Masison D.C."/>
            <person name="Blanc A."/>
            <person name="Ribas J.C."/>
            <person name="Carroll K."/>
            <person name="Sonenberg N."/>
            <person name="Wickner R.B."/>
        </authorList>
    </citation>
    <scope>FUNCTION</scope>
</reference>
<reference key="9">
    <citation type="journal article" date="1998" name="EMBO J.">
        <title>The 3' to 5' degradation of yeast mRNAs is a general mechanism for mRNA turnover that requires the SKI2 DEVH box protein and 3' to 5' exonucleases of the exosome complex.</title>
        <authorList>
            <person name="Anderson J.S.J."/>
            <person name="Parker R.P."/>
        </authorList>
    </citation>
    <scope>FUNCTION</scope>
</reference>
<reference key="10">
    <citation type="journal article" date="2000" name="RNA">
        <title>The yeast antiviral proteins Ski2p, Ski3p, and Ski8p exist as a complex in vivo.</title>
        <authorList>
            <person name="Brown J.T."/>
            <person name="Bai X."/>
            <person name="Johnson A.W."/>
        </authorList>
    </citation>
    <scope>FUNCTION</scope>
    <scope>IDENTIFICATION IN THE SKI COMPLEX</scope>
    <scope>SUBCELLULAR LOCATION</scope>
</reference>
<reference key="11">
    <citation type="journal article" date="2001" name="EMBO J.">
        <title>Ski7p G protein interacts with the exosome and the Ski complex for 3'-to-5' mRNA decay in yeast.</title>
        <authorList>
            <person name="Araki Y."/>
            <person name="Takahashi S."/>
            <person name="Kobayashi T."/>
            <person name="Kajiho H."/>
            <person name="Hoshino S."/>
            <person name="Katada T."/>
        </authorList>
    </citation>
    <scope>INTERACTION WITH SKI7</scope>
    <scope>FUNCTION OF THE SKI COMPLEX</scope>
</reference>
<reference key="12">
    <citation type="journal article" date="2001" name="RNA">
        <title>A cis-acting element known to block 3' mRNA degradation enhances expression of polyA-minus mRNA in wild-type yeast cells and phenocopies a ski mutant.</title>
        <authorList>
            <person name="Brown J.T."/>
            <person name="Johnson A.W."/>
        </authorList>
    </citation>
    <scope>FUNCTION OF THE SKI COMPLEX</scope>
</reference>
<reference key="13">
    <citation type="journal article" date="2003" name="Nature">
        <title>Global analysis of protein localization in budding yeast.</title>
        <authorList>
            <person name="Huh W.-K."/>
            <person name="Falvo J.V."/>
            <person name="Gerke L.C."/>
            <person name="Carroll A.S."/>
            <person name="Howson R.W."/>
            <person name="Weissman J.S."/>
            <person name="O'Shea E.K."/>
        </authorList>
    </citation>
    <scope>SUBCELLULAR LOCATION [LARGE SCALE ANALYSIS]</scope>
</reference>
<reference key="14">
    <citation type="journal article" date="2003" name="Nature">
        <title>Global analysis of protein expression in yeast.</title>
        <authorList>
            <person name="Ghaemmaghami S."/>
            <person name="Huh W.-K."/>
            <person name="Bower K."/>
            <person name="Howson R.W."/>
            <person name="Belle A."/>
            <person name="Dephoure N."/>
            <person name="O'Shea E.K."/>
            <person name="Weissman J.S."/>
        </authorList>
    </citation>
    <scope>LEVEL OF PROTEIN EXPRESSION [LARGE SCALE ANALYSIS]</scope>
</reference>
<reference key="15">
    <citation type="journal article" date="2003" name="Proc. Natl. Acad. Sci. U.S.A.">
        <title>Systematic, genome-wide identification of host genes affecting replication of a positive-strand RNA virus.</title>
        <authorList>
            <person name="Kushner D.B."/>
            <person name="Lindenbach B.D."/>
            <person name="Grdzelishvili V.Z."/>
            <person name="Noueiry A.O."/>
            <person name="Paul S.M."/>
            <person name="Ahlquist P."/>
        </authorList>
    </citation>
    <scope>FUNCTION</scope>
</reference>
<reference key="16">
    <citation type="journal article" date="2004" name="Science">
        <title>Structure-based assembly of protein complexes in yeast.</title>
        <authorList>
            <person name="Aloy P."/>
            <person name="Boettcher B."/>
            <person name="Ceulemans H."/>
            <person name="Leutwein C."/>
            <person name="Mellwig C."/>
            <person name="Fischer S."/>
            <person name="Gavin A.-C."/>
            <person name="Bork P."/>
            <person name="Superti-Furga G."/>
            <person name="Serrano L."/>
            <person name="Russell R.B."/>
        </authorList>
    </citation>
    <scope>MODELING OF THE SKI COMPLEX 3D-STRUCTURE</scope>
</reference>
<accession>P17883</accession>
<accession>Q06585</accession>
<gene>
    <name type="primary">SKI3</name>
    <name type="ordered locus">YPR189W</name>
    <name type="ORF">P9677.7</name>
</gene>
<keyword id="KW-0002">3D-structure</keyword>
<keyword id="KW-0051">Antiviral defense</keyword>
<keyword id="KW-0963">Cytoplasm</keyword>
<keyword id="KW-0539">Nucleus</keyword>
<keyword id="KW-1185">Reference proteome</keyword>
<keyword id="KW-0677">Repeat</keyword>
<keyword id="KW-0802">TPR repeat</keyword>
<name>SKI3_YEAST</name>
<proteinExistence type="evidence at protein level"/>
<protein>
    <recommendedName>
        <fullName>Superkiller protein 3</fullName>
    </recommendedName>
</protein>
<sequence length="1432" mass="163726">MSDIKQLLKEAKQELTNRDYEETIEISEKVLKLDPDNYFAHIFLGKALSSLPASNNVSSNRNLERATNHYVSAAKLVPDNLLAWKGLFLLFRTTEVVPDILSYDEYFDLCGQYADALLKQEQSQVELINDIKLLKKTHPDCQKAFYQHLKPGSLMAETIGRHLSTPQDALLNLIKILSNIETTEIGKTLSQNRLKLKASDPDYQIKLNSFSWEIIKNSEIDQLYNQLVNILADDQKRSEIENQWLEYRIKVLKSMPLDVKKDFFTKVKEMVEDMVLVNHQSLLAWQKYFEWTDYEDLDNMDAPLIIKYFKKFPKDPLAMILYSWLSSKLSKYDIKSLESANKPPEGHKKTEKETDIKDVDETNEDEVKDRVEDEVKDRVEDEVKDQDEEAKEDEEEDLDDIEIGLLEEEVVTVLTENIVKCKNNILAHRILCQYYLLTKEYEAALPYIKNGISLIAYNIKDLGVHLPLTKREFSLDLATVYTYVDAPKDHNAALKLYDNILSGDFSNIQAKMGKGIIFIERKNWKDAMTLLTQVHEQSPNNLEVLSELSWSKAHMGYMDEALAGLDTVIKGIKGMDLRSIDFRALNLWRQAKVYIMKHASINDAKQENVKCAFKLLIQSIKILDTFAPGFSTLGDIYCHYYKDHLRAFKCYFKAFDLDAGDYTAAKYITETYASKPNWQAASSIASRLIKGEKAKAELRSNNWPFRVVGIAHLEKQEESDSIEWFQSALRVDPNDVESWVGLGQAYHACGRIEASIKVFDKAIQLRPSHTFAQYFKAISLCDVGEYLESLDILEKVCQEAATEESFQIGLVEVLMRCSLDLYSQGFLLKSVSIAKDTIERIKIIISELKCENQQVWIYLSQVLRLFIWIESKVDTLPVESLVSIFENSQFSGSEEIDSVDNIKIDTLLDSTTDDNVSIACKFLILASKYSVSDQKFTDIAGTVRASYWYNIGISELTAFITLKEPQYRDAAIFAFKKSIQLQSNTSETWIGLGIATMDINFRVSQHCFIKATALEPKATNTWFNLAMLGLKKKDTEFAQQVLNKLQSLAPQDSSPWLGMALILEEQGDIIGSSKLFAHSFILSNGRSKAAQFMYAKNVLENHINNGDDERDIETVEKLTTASIALEQFFKKSPDSQFALQCALLTLERLHHYENANELANRLIGILEKKFEKTQDERELFNFAIIKGQFARIHLGLGNFELSIENADLSQGIISESSDEKSMKTKISNHICLGLSYFFLNDFDQTLNQFQELLSISKDSKHLVVLIAKVLYDVGESDTKEIALQELTEYIATSGADLLVTLTIAAMSILDDKREDLSIILEELKALPLSKQIIDKHKDAPYLIEEITKRLYRNDTGKQVWQRSAYFFPNNLKVWERLDKNIQRRIASNGQNKVTAEEMSKLYCESKNLRSIQRGMFLCPWNVTAVKALNECF</sequence>
<feature type="chain" id="PRO_0000106323" description="Superkiller protein 3">
    <location>
        <begin position="1"/>
        <end position="1432"/>
    </location>
</feature>
<feature type="repeat" description="TPR 1">
    <location>
        <begin position="4"/>
        <end position="37"/>
    </location>
</feature>
<feature type="repeat" description="TPR 2">
    <location>
        <begin position="47"/>
        <end position="80"/>
    </location>
</feature>
<feature type="repeat" description="TPR 3">
    <location>
        <begin position="425"/>
        <end position="458"/>
    </location>
</feature>
<feature type="repeat" description="TPR 4">
    <location>
        <begin position="471"/>
        <end position="507"/>
    </location>
</feature>
<feature type="repeat" description="TPR 5">
    <location>
        <begin position="508"/>
        <end position="541"/>
    </location>
</feature>
<feature type="repeat" description="TPR 6">
    <location>
        <begin position="627"/>
        <end position="661"/>
    </location>
</feature>
<feature type="repeat" description="TPR 7">
    <location>
        <begin position="702"/>
        <end position="735"/>
    </location>
</feature>
<feature type="repeat" description="TPR 8">
    <location>
        <begin position="736"/>
        <end position="769"/>
    </location>
</feature>
<feature type="repeat" description="TPR 9">
    <location>
        <begin position="945"/>
        <end position="985"/>
    </location>
</feature>
<feature type="repeat" description="TPR 10">
    <location>
        <begin position="987"/>
        <end position="1018"/>
    </location>
</feature>
<feature type="repeat" description="TPR 11">
    <location>
        <begin position="1226"/>
        <end position="1259"/>
    </location>
</feature>
<feature type="region of interest" description="Disordered" evidence="1">
    <location>
        <begin position="339"/>
        <end position="397"/>
    </location>
</feature>
<feature type="compositionally biased region" description="Basic and acidic residues" evidence="1">
    <location>
        <begin position="344"/>
        <end position="381"/>
    </location>
</feature>
<feature type="compositionally biased region" description="Acidic residues" evidence="1">
    <location>
        <begin position="382"/>
        <end position="397"/>
    </location>
</feature>
<feature type="sequence conflict" description="In Ref. 1; AAA50573." evidence="12" ref="1">
    <original>T</original>
    <variation>I</variation>
    <location>
        <position position="985"/>
    </location>
</feature>
<feature type="helix" evidence="13">
    <location>
        <begin position="663"/>
        <end position="673"/>
    </location>
</feature>
<feature type="turn" evidence="13">
    <location>
        <begin position="674"/>
        <end position="676"/>
    </location>
</feature>
<feature type="helix" evidence="13">
    <location>
        <begin position="678"/>
        <end position="690"/>
    </location>
</feature>
<feature type="helix" evidence="13">
    <location>
        <begin position="697"/>
        <end position="699"/>
    </location>
</feature>
<feature type="helix" evidence="13">
    <location>
        <begin position="703"/>
        <end position="714"/>
    </location>
</feature>
<feature type="helix" evidence="13">
    <location>
        <begin position="718"/>
        <end position="731"/>
    </location>
</feature>
<feature type="helix" evidence="13">
    <location>
        <begin position="736"/>
        <end position="748"/>
    </location>
</feature>
<feature type="helix" evidence="13">
    <location>
        <begin position="752"/>
        <end position="765"/>
    </location>
</feature>
<feature type="helix" evidence="13">
    <location>
        <begin position="771"/>
        <end position="783"/>
    </location>
</feature>
<feature type="helix" evidence="14">
    <location>
        <begin position="787"/>
        <end position="798"/>
    </location>
</feature>
<feature type="helix" evidence="14">
    <location>
        <begin position="804"/>
        <end position="824"/>
    </location>
</feature>
<feature type="helix" evidence="14">
    <location>
        <begin position="827"/>
        <end position="846"/>
    </location>
</feature>
<feature type="helix" evidence="14">
    <location>
        <begin position="853"/>
        <end position="868"/>
    </location>
</feature>
<feature type="helix" evidence="14">
    <location>
        <begin position="870"/>
        <end position="875"/>
    </location>
</feature>
<feature type="helix" evidence="14">
    <location>
        <begin position="878"/>
        <end position="887"/>
    </location>
</feature>
<feature type="helix" evidence="14">
    <location>
        <begin position="894"/>
        <end position="900"/>
    </location>
</feature>
<feature type="helix" evidence="14">
    <location>
        <begin position="904"/>
        <end position="908"/>
    </location>
</feature>
<feature type="helix" evidence="14">
    <location>
        <begin position="915"/>
        <end position="928"/>
    </location>
</feature>
<feature type="helix" evidence="14">
    <location>
        <begin position="942"/>
        <end position="962"/>
    </location>
</feature>
<feature type="helix" evidence="14">
    <location>
        <begin position="965"/>
        <end position="979"/>
    </location>
</feature>
<feature type="helix" evidence="14">
    <location>
        <begin position="988"/>
        <end position="995"/>
    </location>
</feature>
<feature type="turn" evidence="14">
    <location>
        <begin position="996"/>
        <end position="999"/>
    </location>
</feature>
<feature type="helix" evidence="14">
    <location>
        <begin position="1001"/>
        <end position="1006"/>
    </location>
</feature>
<feature type="turn" evidence="14">
    <location>
        <begin position="1007"/>
        <end position="1009"/>
    </location>
</feature>
<feature type="helix" evidence="14">
    <location>
        <begin position="1010"/>
        <end position="1014"/>
    </location>
</feature>
<feature type="helix" evidence="14">
    <location>
        <begin position="1020"/>
        <end position="1031"/>
    </location>
</feature>
<feature type="helix" evidence="14">
    <location>
        <begin position="1035"/>
        <end position="1048"/>
    </location>
</feature>
<feature type="helix" evidence="14">
    <location>
        <begin position="1053"/>
        <end position="1065"/>
    </location>
</feature>
<feature type="helix" evidence="14">
    <location>
        <begin position="1070"/>
        <end position="1082"/>
    </location>
</feature>
<feature type="turn" evidence="14">
    <location>
        <begin position="1083"/>
        <end position="1085"/>
    </location>
</feature>
<feature type="helix" evidence="14">
    <location>
        <begin position="1088"/>
        <end position="1101"/>
    </location>
</feature>
<feature type="strand" evidence="14">
    <location>
        <begin position="1103"/>
        <end position="1105"/>
    </location>
</feature>
<feature type="helix" evidence="14">
    <location>
        <begin position="1112"/>
        <end position="1128"/>
    </location>
</feature>
<feature type="turn" evidence="14">
    <location>
        <begin position="1129"/>
        <end position="1131"/>
    </location>
</feature>
<feature type="helix" evidence="14">
    <location>
        <begin position="1136"/>
        <end position="1148"/>
    </location>
</feature>
<feature type="helix" evidence="14">
    <location>
        <begin position="1152"/>
        <end position="1172"/>
    </location>
</feature>
<feature type="helix" evidence="14">
    <location>
        <begin position="1178"/>
        <end position="1196"/>
    </location>
</feature>
<feature type="helix" evidence="14">
    <location>
        <begin position="1199"/>
        <end position="1213"/>
    </location>
</feature>
<feature type="helix" evidence="14">
    <location>
        <begin position="1219"/>
        <end position="1238"/>
    </location>
</feature>
<feature type="turn" evidence="14">
    <location>
        <begin position="1239"/>
        <end position="1241"/>
    </location>
</feature>
<feature type="helix" evidence="14">
    <location>
        <begin position="1244"/>
        <end position="1256"/>
    </location>
</feature>
<feature type="helix" evidence="14">
    <location>
        <begin position="1260"/>
        <end position="1273"/>
    </location>
</feature>
<feature type="helix" evidence="14">
    <location>
        <begin position="1276"/>
        <end position="1292"/>
    </location>
</feature>
<feature type="helix" evidence="14">
    <location>
        <begin position="1297"/>
        <end position="1310"/>
    </location>
</feature>
<feature type="helix" evidence="14">
    <location>
        <begin position="1313"/>
        <end position="1323"/>
    </location>
</feature>
<feature type="helix" evidence="14">
    <location>
        <begin position="1328"/>
        <end position="1333"/>
    </location>
</feature>
<feature type="helix" evidence="14">
    <location>
        <begin position="1338"/>
        <end position="1350"/>
    </location>
</feature>
<feature type="turn" evidence="14">
    <location>
        <begin position="1354"/>
        <end position="1356"/>
    </location>
</feature>
<feature type="helix" evidence="14">
    <location>
        <begin position="1357"/>
        <end position="1366"/>
    </location>
</feature>
<feature type="turn" evidence="14">
    <location>
        <begin position="1371"/>
        <end position="1377"/>
    </location>
</feature>
<feature type="helix" evidence="14">
    <location>
        <begin position="1379"/>
        <end position="1385"/>
    </location>
</feature>
<feature type="strand" evidence="14">
    <location>
        <begin position="1387"/>
        <end position="1391"/>
    </location>
</feature>
<feature type="helix" evidence="14">
    <location>
        <begin position="1395"/>
        <end position="1403"/>
    </location>
</feature>
<feature type="helix" evidence="14">
    <location>
        <begin position="1408"/>
        <end position="1417"/>
    </location>
</feature>
<feature type="helix" evidence="14">
    <location>
        <begin position="1422"/>
        <end position="1431"/>
    </location>
</feature>
<evidence type="ECO:0000256" key="1">
    <source>
        <dbReference type="SAM" id="MobiDB-lite"/>
    </source>
</evidence>
<evidence type="ECO:0000269" key="2">
    <source>
    </source>
</evidence>
<evidence type="ECO:0000269" key="3">
    <source>
    </source>
</evidence>
<evidence type="ECO:0000269" key="4">
    <source>
    </source>
</evidence>
<evidence type="ECO:0000269" key="5">
    <source>
    </source>
</evidence>
<evidence type="ECO:0000269" key="6">
    <source>
    </source>
</evidence>
<evidence type="ECO:0000269" key="7">
    <source>
    </source>
</evidence>
<evidence type="ECO:0000269" key="8">
    <source>
    </source>
</evidence>
<evidence type="ECO:0000269" key="9">
    <source>
    </source>
</evidence>
<evidence type="ECO:0000269" key="10">
    <source>
    </source>
</evidence>
<evidence type="ECO:0000269" key="11">
    <source>
    </source>
</evidence>
<evidence type="ECO:0000305" key="12"/>
<evidence type="ECO:0007829" key="13">
    <source>
        <dbReference type="PDB" id="8QCA"/>
    </source>
</evidence>
<evidence type="ECO:0007829" key="14">
    <source>
        <dbReference type="PDB" id="8QCB"/>
    </source>
</evidence>
<comment type="function">
    <text evidence="2 3 4 6 7 8 9 10 11">Component of the SKI complex involved in 3'-mRNA degradation pathway. Represses dsRNA virus propagation by specifically blocking translation of viral mRNAs, perhaps recognizing the absence of CAP or poly(A). Essential for cell growth only in the presence of M1 replicon.</text>
</comment>
<comment type="subunit">
    <text evidence="2 3">Component of the SKI complex composed of at least SKI2, SKI3 and SKI8. The SKI complex interacts with SKI7, which makes the link between the SKI complex and the exosome in order to perform mRNA degradation.</text>
</comment>
<comment type="interaction">
    <interactant intactId="EBI-1861">
        <id>P17883</id>
    </interactant>
    <interactant intactId="EBI-1851">
        <id>P35207</id>
        <label>SKI2</label>
    </interactant>
    <organismsDiffer>false</organismsDiffer>
    <experiments>12</experiments>
</comment>
<comment type="interaction">
    <interactant intactId="EBI-1861">
        <id>P17883</id>
    </interactant>
    <interactant intactId="EBI-1389">
        <id>Q08491</id>
        <label>SKI7</label>
    </interactant>
    <organismsDiffer>false</organismsDiffer>
    <experiments>3</experiments>
</comment>
<comment type="interaction">
    <interactant intactId="EBI-1861">
        <id>P17883</id>
    </interactant>
    <interactant intactId="EBI-17260">
        <id>Q02793</id>
        <label>SKI8</label>
    </interactant>
    <organismsDiffer>false</organismsDiffer>
    <experiments>9</experiments>
</comment>
<comment type="subcellular location">
    <subcellularLocation>
        <location>Cytoplasm</location>
    </subcellularLocation>
    <subcellularLocation>
        <location>Nucleus</location>
    </subcellularLocation>
</comment>
<comment type="miscellaneous">
    <text evidence="5">Present with 11900 molecules/cell in log phase SD medium.</text>
</comment>
<comment type="similarity">
    <text evidence="12">Belongs to the SKI3 family.</text>
</comment>
<organism>
    <name type="scientific">Saccharomyces cerevisiae (strain ATCC 204508 / S288c)</name>
    <name type="common">Baker's yeast</name>
    <dbReference type="NCBI Taxonomy" id="559292"/>
    <lineage>
        <taxon>Eukaryota</taxon>
        <taxon>Fungi</taxon>
        <taxon>Dikarya</taxon>
        <taxon>Ascomycota</taxon>
        <taxon>Saccharomycotina</taxon>
        <taxon>Saccharomycetes</taxon>
        <taxon>Saccharomycetales</taxon>
        <taxon>Saccharomycetaceae</taxon>
        <taxon>Saccharomyces</taxon>
    </lineage>
</organism>